<proteinExistence type="evidence at protein level"/>
<name>SOX2_CHICK</name>
<gene>
    <name type="primary">SOX2</name>
</gene>
<dbReference type="EMBL" id="U12532">
    <property type="protein sequence ID" value="AAB09662.1"/>
    <property type="molecule type" value="mRNA"/>
</dbReference>
<dbReference type="EMBL" id="D50603">
    <property type="protein sequence ID" value="BAA09168.1"/>
    <property type="status" value="ALT_INIT"/>
    <property type="molecule type" value="mRNA"/>
</dbReference>
<dbReference type="EMBL" id="AB092842">
    <property type="protein sequence ID" value="BAC67545.1"/>
    <property type="molecule type" value="Genomic_DNA"/>
</dbReference>
<dbReference type="PIR" id="I50706">
    <property type="entry name" value="I50706"/>
</dbReference>
<dbReference type="RefSeq" id="NP_990519.3">
    <property type="nucleotide sequence ID" value="NM_205188.3"/>
</dbReference>
<dbReference type="BMRB" id="P48430"/>
<dbReference type="SMR" id="P48430"/>
<dbReference type="FunCoup" id="P48430">
    <property type="interactions" value="15"/>
</dbReference>
<dbReference type="STRING" id="9031.ENSGALP00000045318"/>
<dbReference type="GlyGen" id="P48430">
    <property type="glycosylation" value="1 site"/>
</dbReference>
<dbReference type="PaxDb" id="9031-ENSGALP00000014363"/>
<dbReference type="GeneID" id="396105"/>
<dbReference type="KEGG" id="gga:396105"/>
<dbReference type="CTD" id="6657"/>
<dbReference type="VEuPathDB" id="HostDB:geneid_396105"/>
<dbReference type="eggNOG" id="KOG0527">
    <property type="taxonomic scope" value="Eukaryota"/>
</dbReference>
<dbReference type="HOGENOM" id="CLU_021123_0_0_1"/>
<dbReference type="InParanoid" id="P48430"/>
<dbReference type="OMA" id="MYNMMES"/>
<dbReference type="OrthoDB" id="6247875at2759"/>
<dbReference type="PhylomeDB" id="P48430"/>
<dbReference type="TreeFam" id="TF351735"/>
<dbReference type="PRO" id="PR:P48430"/>
<dbReference type="Proteomes" id="UP000000539">
    <property type="component" value="Unassembled WGS sequence"/>
</dbReference>
<dbReference type="GO" id="GO:0005737">
    <property type="term" value="C:cytoplasm"/>
    <property type="evidence" value="ECO:0000250"/>
    <property type="project" value="UniProtKB"/>
</dbReference>
<dbReference type="GO" id="GO:0005654">
    <property type="term" value="C:nucleoplasm"/>
    <property type="evidence" value="ECO:0000304"/>
    <property type="project" value="Reactome"/>
</dbReference>
<dbReference type="GO" id="GO:0005634">
    <property type="term" value="C:nucleus"/>
    <property type="evidence" value="ECO:0000314"/>
    <property type="project" value="AgBase"/>
</dbReference>
<dbReference type="GO" id="GO:0001228">
    <property type="term" value="F:DNA-binding transcription activator activity, RNA polymerase II-specific"/>
    <property type="evidence" value="ECO:0000318"/>
    <property type="project" value="GO_Central"/>
</dbReference>
<dbReference type="GO" id="GO:0000978">
    <property type="term" value="F:RNA polymerase II cis-regulatory region sequence-specific DNA binding"/>
    <property type="evidence" value="ECO:0000318"/>
    <property type="project" value="GO_Central"/>
</dbReference>
<dbReference type="GO" id="GO:0043565">
    <property type="term" value="F:sequence-specific DNA binding"/>
    <property type="evidence" value="ECO:0000314"/>
    <property type="project" value="UniProtKB"/>
</dbReference>
<dbReference type="GO" id="GO:0007420">
    <property type="term" value="P:brain development"/>
    <property type="evidence" value="ECO:0000318"/>
    <property type="project" value="GO_Central"/>
</dbReference>
<dbReference type="GO" id="GO:0045165">
    <property type="term" value="P:cell fate commitment"/>
    <property type="evidence" value="ECO:0000318"/>
    <property type="project" value="GO_Central"/>
</dbReference>
<dbReference type="GO" id="GO:0045665">
    <property type="term" value="P:negative regulation of neuron differentiation"/>
    <property type="evidence" value="ECO:0000315"/>
    <property type="project" value="UniProtKB"/>
</dbReference>
<dbReference type="GO" id="GO:0000122">
    <property type="term" value="P:negative regulation of transcription by RNA polymerase II"/>
    <property type="evidence" value="ECO:0000318"/>
    <property type="project" value="GO_Central"/>
</dbReference>
<dbReference type="GO" id="GO:0030182">
    <property type="term" value="P:neuron differentiation"/>
    <property type="evidence" value="ECO:0000318"/>
    <property type="project" value="GO_Central"/>
</dbReference>
<dbReference type="GO" id="GO:0045893">
    <property type="term" value="P:positive regulation of DNA-templated transcription"/>
    <property type="evidence" value="ECO:0000314"/>
    <property type="project" value="UniProtKB"/>
</dbReference>
<dbReference type="GO" id="GO:0045944">
    <property type="term" value="P:positive regulation of transcription by RNA polymerase II"/>
    <property type="evidence" value="ECO:0000315"/>
    <property type="project" value="UniProtKB"/>
</dbReference>
<dbReference type="GO" id="GO:0016360">
    <property type="term" value="P:sensory organ precursor cell fate determination"/>
    <property type="evidence" value="ECO:0000315"/>
    <property type="project" value="AgBase"/>
</dbReference>
<dbReference type="CDD" id="cd01388">
    <property type="entry name" value="HMG-box_SoxB"/>
    <property type="match status" value="1"/>
</dbReference>
<dbReference type="FunFam" id="1.10.30.10:FF:000002">
    <property type="entry name" value="transcription factor Sox-2"/>
    <property type="match status" value="1"/>
</dbReference>
<dbReference type="Gene3D" id="1.10.30.10">
    <property type="entry name" value="High mobility group box domain"/>
    <property type="match status" value="1"/>
</dbReference>
<dbReference type="InterPro" id="IPR009071">
    <property type="entry name" value="HMG_box_dom"/>
</dbReference>
<dbReference type="InterPro" id="IPR036910">
    <property type="entry name" value="HMG_box_dom_sf"/>
</dbReference>
<dbReference type="InterPro" id="IPR022097">
    <property type="entry name" value="SOX_fam"/>
</dbReference>
<dbReference type="InterPro" id="IPR050140">
    <property type="entry name" value="SRY-related_HMG-box_TF-like"/>
</dbReference>
<dbReference type="PANTHER" id="PTHR10270">
    <property type="entry name" value="SOX TRANSCRIPTION FACTOR"/>
    <property type="match status" value="1"/>
</dbReference>
<dbReference type="PANTHER" id="PTHR10270:SF231">
    <property type="entry name" value="TRANSCRIPTION FACTOR SOX-2"/>
    <property type="match status" value="1"/>
</dbReference>
<dbReference type="Pfam" id="PF00505">
    <property type="entry name" value="HMG_box"/>
    <property type="match status" value="1"/>
</dbReference>
<dbReference type="Pfam" id="PF12336">
    <property type="entry name" value="SOXp"/>
    <property type="match status" value="1"/>
</dbReference>
<dbReference type="SMART" id="SM00398">
    <property type="entry name" value="HMG"/>
    <property type="match status" value="1"/>
</dbReference>
<dbReference type="SUPFAM" id="SSF47095">
    <property type="entry name" value="HMG-box"/>
    <property type="match status" value="1"/>
</dbReference>
<dbReference type="PROSITE" id="PS50118">
    <property type="entry name" value="HMG_BOX_2"/>
    <property type="match status" value="1"/>
</dbReference>
<sequence>MYNMMETELKPPAPQQTSGGGTGNSNSAANNQKNSPDRVKRPMNAFMVWSRGQRRKMAQENPKMHNSEISKRLGAEWKLLSEAEKRPFIDEAKRLRALHMKEHPDYKYRPRRKTKTLMKKDKYTLPGGLLAPGTNTMTTGVGVGATLGAGVNQRMDSYAHMNGWTNGGYGMMQEQLGYPQHPGLNAHNAAQMQPMHRYDVSALQYNSMTSSQTYMNGSPTYSMSYSQQGTPGMALGSMGSVVKTESSSSPPVVTSSSHSRAPCQAGDLRDMISMYLPGAEVPEPAAPSRLHMSQHYQSAPVPGTAINGTLPLSHM</sequence>
<organism>
    <name type="scientific">Gallus gallus</name>
    <name type="common">Chicken</name>
    <dbReference type="NCBI Taxonomy" id="9031"/>
    <lineage>
        <taxon>Eukaryota</taxon>
        <taxon>Metazoa</taxon>
        <taxon>Chordata</taxon>
        <taxon>Craniata</taxon>
        <taxon>Vertebrata</taxon>
        <taxon>Euteleostomi</taxon>
        <taxon>Archelosauria</taxon>
        <taxon>Archosauria</taxon>
        <taxon>Dinosauria</taxon>
        <taxon>Saurischia</taxon>
        <taxon>Theropoda</taxon>
        <taxon>Coelurosauria</taxon>
        <taxon>Aves</taxon>
        <taxon>Neognathae</taxon>
        <taxon>Galloanserae</taxon>
        <taxon>Galliformes</taxon>
        <taxon>Phasianidae</taxon>
        <taxon>Phasianinae</taxon>
        <taxon>Gallus</taxon>
    </lineage>
</organism>
<protein>
    <recommendedName>
        <fullName>Transcription factor SOX-2</fullName>
        <shortName>cSox2</shortName>
    </recommendedName>
    <alternativeName>
        <fullName>delta EF2a</fullName>
    </alternativeName>
</protein>
<keyword id="KW-0010">Activator</keyword>
<keyword id="KW-0217">Developmental protein</keyword>
<keyword id="KW-0238">DNA-binding</keyword>
<keyword id="KW-0539">Nucleus</keyword>
<keyword id="KW-1185">Reference proteome</keyword>
<keyword id="KW-0804">Transcription</keyword>
<keyword id="KW-0805">Transcription regulation</keyword>
<feature type="chain" id="PRO_0000048718" description="Transcription factor SOX-2">
    <location>
        <begin position="1"/>
        <end position="315"/>
    </location>
</feature>
<feature type="DNA-binding region" description="HMG box" evidence="3">
    <location>
        <begin position="39"/>
        <end position="107"/>
    </location>
</feature>
<feature type="region of interest" description="Disordered" evidence="4">
    <location>
        <begin position="1"/>
        <end position="42"/>
    </location>
</feature>
<feature type="region of interest" description="Disordered" evidence="4">
    <location>
        <begin position="241"/>
        <end position="264"/>
    </location>
</feature>
<feature type="short sequence motif" description="9aaTAD" evidence="1">
    <location>
        <begin position="270"/>
        <end position="278"/>
    </location>
</feature>
<feature type="compositionally biased region" description="Low complexity" evidence="4">
    <location>
        <begin position="241"/>
        <end position="259"/>
    </location>
</feature>
<evidence type="ECO:0000250" key="1">
    <source>
        <dbReference type="UniProtKB" id="P41225"/>
    </source>
</evidence>
<evidence type="ECO:0000250" key="2">
    <source>
        <dbReference type="UniProtKB" id="P48432"/>
    </source>
</evidence>
<evidence type="ECO:0000255" key="3">
    <source>
        <dbReference type="PROSITE-ProRule" id="PRU00267"/>
    </source>
</evidence>
<evidence type="ECO:0000256" key="4">
    <source>
        <dbReference type="SAM" id="MobiDB-lite"/>
    </source>
</evidence>
<evidence type="ECO:0000269" key="5">
    <source>
    </source>
</evidence>
<evidence type="ECO:0000269" key="6">
    <source>
    </source>
</evidence>
<evidence type="ECO:0000269" key="7">
    <source>
    </source>
</evidence>
<evidence type="ECO:0000305" key="8"/>
<comment type="function">
    <text evidence="2 5 6 7">Transcriptional activator (PubMed:7628452). Binds to the consensus DNA sequence 5'-TCATTGTTGTTG-3' (PubMed:7628452). In cooperation with other transcription factors, binds to the promoter sequence of the crystallin gene to activate transcription in the lens (PubMed:7628452). Downstream SRRT target that mediates the promotion of neural stem cell self-renewal (By similarity). Keeps neural cells undifferentiated by counteracting the activity of proneural proteins and suppresses neuronal differentiation (PubMed:14517545). May function as a switch in neuronal development (PubMed:7748786).</text>
</comment>
<comment type="subcellular location">
    <subcellularLocation>
        <location evidence="3 6">Nucleus</location>
    </subcellularLocation>
</comment>
<comment type="tissue specificity">
    <text evidence="6 7">First expressed in the embryonic neural plate shortly before closure and expression continues in the neural tube. From stage 16 onwards, expressed throughout the CNS including the brain, with expression predominant in the undifferentiated cells of the neural epithelium. Also expressed at a low level in the retina and the gut epithelium. Highly expressed in the lens placode at stage 13 and in the lens at stage 17.</text>
</comment>
<comment type="developmental stage">
    <text evidence="7">Expression is maximal at stages 24-31, then begins to decline. Expression is low by stage 37 and is absent by stage 39. Does not appear to be expressed in adults.</text>
</comment>
<comment type="domain">
    <text evidence="1">The 9aaTAD motif is a transactivation domain present in a large number of yeast and animal transcription factors.</text>
</comment>
<comment type="caution">
    <text evidence="8">It is uncertain whether Met-1 or Met-4 is the initiator.</text>
</comment>
<comment type="sequence caution" evidence="8">
    <conflict type="erroneous initiation">
        <sequence resource="EMBL-CDS" id="BAA09168"/>
    </conflict>
</comment>
<accession>P48430</accession>
<accession>Q54A48</accession>
<reference key="1">
    <citation type="journal article" date="1995" name="Mech. Dev.">
        <title>Embryonic expression of the chicken Sox2, Sox3 and Sox11 genes suggests an interactive role in neuronal development.</title>
        <authorList>
            <person name="Uwanogho D."/>
            <person name="Rex M."/>
            <person name="Cartwright E.J."/>
            <person name="Pearl G."/>
            <person name="Healy C."/>
            <person name="Scotting P.J."/>
            <person name="Sharpe P.T."/>
        </authorList>
    </citation>
    <scope>NUCLEOTIDE SEQUENCE [MRNA]</scope>
    <scope>PUTATIVE FUNCTION</scope>
    <scope>TISSUE SPECIFICITY</scope>
    <scope>DEVELOPMENTAL STAGE</scope>
    <source>
        <tissue>Embryo</tissue>
    </source>
</reference>
<reference key="2">
    <citation type="journal article" date="1995" name="EMBO J.">
        <title>Involvement of SOX proteins in lens-specific activation of crystallin genes.</title>
        <authorList>
            <person name="Kamachi Y."/>
            <person name="Sockanathan S."/>
            <person name="Liu Q."/>
            <person name="Breitman M."/>
            <person name="Lovell-Badge R."/>
            <person name="Kondoh H."/>
        </authorList>
    </citation>
    <scope>NUCLEOTIDE SEQUENCE [MRNA]</scope>
    <scope>FUNCTION</scope>
    <scope>DNA-BINDING</scope>
    <scope>SUBCELLULAR LOCATION</scope>
    <scope>TISSUE SPECIFICITY</scope>
    <source>
        <strain>White leghorn</strain>
        <tissue>Brain</tissue>
    </source>
</reference>
<reference key="3">
    <citation type="journal article" date="2003" name="Dev. Cell">
        <title>Functional analysis of chicken Sox2 enhancers highlights an array of diverse regulatory elements that are conserved in mammals.</title>
        <authorList>
            <person name="Uchikawa M."/>
            <person name="Ishida Y."/>
            <person name="Takemoto T."/>
            <person name="Kamachi Y."/>
            <person name="Kondoh H."/>
        </authorList>
    </citation>
    <scope>NUCLEOTIDE SEQUENCE [GENOMIC DNA]</scope>
    <source>
        <tissue>Liver</tissue>
    </source>
</reference>
<reference key="4">
    <citation type="journal article" date="2003" name="Nat. Neurosci.">
        <title>Vertebrate neurogenesis is counteracted by Sox1-3 activity.</title>
        <authorList>
            <person name="Bylund M."/>
            <person name="Andersson E."/>
            <person name="Novitch B.G."/>
            <person name="Muhr J."/>
        </authorList>
    </citation>
    <scope>FUNCTION</scope>
</reference>